<feature type="chain" id="PRO_0000325520" description="3-dehydroquinate dehydratase">
    <location>
        <begin position="1"/>
        <end position="255"/>
    </location>
</feature>
<feature type="active site" description="Proton donor/acceptor" evidence="1 3">
    <location>
        <position position="144"/>
    </location>
</feature>
<feature type="active site" description="Schiff-base intermediate with substrate" evidence="1 2 3">
    <location>
        <position position="171"/>
    </location>
</feature>
<feature type="binding site" evidence="1 2">
    <location>
        <begin position="47"/>
        <end position="49"/>
    </location>
    <ligand>
        <name>3-dehydroquinate</name>
        <dbReference type="ChEBI" id="CHEBI:32364"/>
    </ligand>
</feature>
<feature type="binding site" evidence="1 2 3">
    <location>
        <position position="83"/>
    </location>
    <ligand>
        <name>3-dehydroquinate</name>
        <dbReference type="ChEBI" id="CHEBI:32364"/>
    </ligand>
</feature>
<feature type="binding site" evidence="1 2 3">
    <location>
        <position position="214"/>
    </location>
    <ligand>
        <name>3-dehydroquinate</name>
        <dbReference type="ChEBI" id="CHEBI:32364"/>
    </ligand>
</feature>
<feature type="binding site" evidence="1 2">
    <location>
        <position position="233"/>
    </location>
    <ligand>
        <name>3-dehydroquinate</name>
        <dbReference type="ChEBI" id="CHEBI:32364"/>
    </ligand>
</feature>
<feature type="binding site" evidence="1 2 3">
    <location>
        <position position="237"/>
    </location>
    <ligand>
        <name>3-dehydroquinate</name>
        <dbReference type="ChEBI" id="CHEBI:32364"/>
    </ligand>
</feature>
<feature type="strand" evidence="6">
    <location>
        <begin position="5"/>
        <end position="7"/>
    </location>
</feature>
<feature type="strand" evidence="6">
    <location>
        <begin position="10"/>
        <end position="12"/>
    </location>
</feature>
<feature type="strand" evidence="6">
    <location>
        <begin position="14"/>
        <end position="16"/>
    </location>
</feature>
<feature type="strand" evidence="6">
    <location>
        <begin position="18"/>
        <end position="23"/>
    </location>
</feature>
<feature type="helix" evidence="6">
    <location>
        <begin position="28"/>
        <end position="38"/>
    </location>
</feature>
<feature type="strand" evidence="6">
    <location>
        <begin position="44"/>
        <end position="49"/>
    </location>
</feature>
<feature type="helix" evidence="6">
    <location>
        <begin position="50"/>
        <end position="52"/>
    </location>
</feature>
<feature type="turn" evidence="6">
    <location>
        <begin position="54"/>
        <end position="57"/>
    </location>
</feature>
<feature type="helix" evidence="6">
    <location>
        <begin position="59"/>
        <end position="72"/>
    </location>
</feature>
<feature type="strand" evidence="6">
    <location>
        <begin position="78"/>
        <end position="81"/>
    </location>
</feature>
<feature type="helix" evidence="6">
    <location>
        <begin position="85"/>
        <end position="87"/>
    </location>
</feature>
<feature type="helix" evidence="6">
    <location>
        <begin position="95"/>
        <end position="107"/>
    </location>
</feature>
<feature type="strand" evidence="6">
    <location>
        <begin position="112"/>
        <end position="117"/>
    </location>
</feature>
<feature type="helix" evidence="6">
    <location>
        <begin position="118"/>
        <end position="120"/>
    </location>
</feature>
<feature type="helix" evidence="6">
    <location>
        <begin position="122"/>
        <end position="134"/>
    </location>
</feature>
<feature type="strand" evidence="6">
    <location>
        <begin position="138"/>
        <end position="147"/>
    </location>
</feature>
<feature type="helix" evidence="6">
    <location>
        <begin position="152"/>
        <end position="164"/>
    </location>
</feature>
<feature type="strand" evidence="6">
    <location>
        <begin position="168"/>
        <end position="174"/>
    </location>
</feature>
<feature type="helix" evidence="6">
    <location>
        <begin position="179"/>
        <end position="195"/>
    </location>
</feature>
<feature type="strand" evidence="6">
    <location>
        <begin position="201"/>
        <end position="205"/>
    </location>
</feature>
<feature type="helix" evidence="6">
    <location>
        <begin position="208"/>
        <end position="214"/>
    </location>
</feature>
<feature type="helix" evidence="6">
    <location>
        <begin position="217"/>
        <end position="220"/>
    </location>
</feature>
<feature type="strand" evidence="6">
    <location>
        <begin position="224"/>
        <end position="226"/>
    </location>
</feature>
<feature type="strand" evidence="5">
    <location>
        <begin position="228"/>
        <end position="231"/>
    </location>
</feature>
<feature type="helix" evidence="6">
    <location>
        <begin position="240"/>
        <end position="252"/>
    </location>
</feature>
<reference key="1">
    <citation type="journal article" date="2006" name="Nat. Genet.">
        <title>The multidrug-resistant human pathogen Clostridium difficile has a highly mobile, mosaic genome.</title>
        <authorList>
            <person name="Sebaihia M."/>
            <person name="Wren B.W."/>
            <person name="Mullany P."/>
            <person name="Fairweather N.F."/>
            <person name="Minton N."/>
            <person name="Stabler R."/>
            <person name="Thomson N.R."/>
            <person name="Roberts A.P."/>
            <person name="Cerdeno-Tarraga A.M."/>
            <person name="Wang H."/>
            <person name="Holden M.T.G."/>
            <person name="Wright A."/>
            <person name="Churcher C."/>
            <person name="Quail M.A."/>
            <person name="Baker S."/>
            <person name="Bason N."/>
            <person name="Brooks K."/>
            <person name="Chillingworth T."/>
            <person name="Cronin A."/>
            <person name="Davis P."/>
            <person name="Dowd L."/>
            <person name="Fraser A."/>
            <person name="Feltwell T."/>
            <person name="Hance Z."/>
            <person name="Holroyd S."/>
            <person name="Jagels K."/>
            <person name="Moule S."/>
            <person name="Mungall K."/>
            <person name="Price C."/>
            <person name="Rabbinowitsch E."/>
            <person name="Sharp S."/>
            <person name="Simmonds M."/>
            <person name="Stevens K."/>
            <person name="Unwin L."/>
            <person name="Whithead S."/>
            <person name="Dupuy B."/>
            <person name="Dougan G."/>
            <person name="Barrell B."/>
            <person name="Parkhill J."/>
        </authorList>
    </citation>
    <scope>NUCLEOTIDE SEQUENCE [LARGE SCALE GENOMIC DNA]</scope>
    <source>
        <strain>630</strain>
    </source>
</reference>
<reference key="2">
    <citation type="journal article" date="2011" name="J. Biol. Chem.">
        <title>Insights into the mechanism of type I dehydroquinate dehydratases from structures of reaction intermediates.</title>
        <authorList>
            <person name="Light S.H."/>
            <person name="Minasov G."/>
            <person name="Shuvalova L."/>
            <person name="Duban M.E."/>
            <person name="Caffrey M."/>
            <person name="Anderson W.F."/>
            <person name="Lavie A."/>
        </authorList>
    </citation>
    <scope>X-RAY CRYSTALLOGRAPHY (2.20 ANGSTROMS) IN COMPLEX WITH 3-DEHYDROSHIKIMATE</scope>
    <scope>FUNCTION</scope>
    <scope>CATALYTIC ACTIVITY</scope>
    <scope>BIOPHYSICOCHEMICAL PROPERTIES</scope>
    <scope>ACTIVE SITE</scope>
    <scope>SUBUNIT</scope>
    <scope>REACTION MECHANISM</scope>
    <source>
        <strain>630</strain>
    </source>
</reference>
<reference key="3">
    <citation type="submission" date="2012-09" db="PDB data bank">
        <title>1.95 Angstrom crystal structure of type I 3-dehydroquinate dehydratase (aroD) from Clostridium difficile with covalent modified comenic acid.</title>
        <authorList>
            <consortium name="Center for Structural Genomics of Infectious Diseases (CSGID)"/>
            <person name="Minasov G."/>
            <person name="Light S.H."/>
            <person name="Shuvalova L."/>
            <person name="Duban M.E."/>
            <person name="Dubrovska I."/>
            <person name="Winsor J."/>
            <person name="Papazisi L."/>
            <person name="Anderson W.F."/>
        </authorList>
    </citation>
    <scope>X-RAY CRYSTALLOGRAPHY (1.95 ANGSTROMS) IN COMPLEX WITH SUBSTRATE ANALOGS</scope>
    <scope>ACTIVE SITE</scope>
    <scope>SUBUNIT</scope>
</reference>
<gene>
    <name evidence="1" type="primary">aroD</name>
    <name type="ordered locus">CD630_22170</name>
</gene>
<name>AROD_CLOD6</name>
<proteinExistence type="evidence at protein level"/>
<organism>
    <name type="scientific">Clostridioides difficile (strain 630)</name>
    <name type="common">Peptoclostridium difficile</name>
    <dbReference type="NCBI Taxonomy" id="272563"/>
    <lineage>
        <taxon>Bacteria</taxon>
        <taxon>Bacillati</taxon>
        <taxon>Bacillota</taxon>
        <taxon>Clostridia</taxon>
        <taxon>Peptostreptococcales</taxon>
        <taxon>Peptostreptococcaceae</taxon>
        <taxon>Clostridioides</taxon>
    </lineage>
</organism>
<protein>
    <recommendedName>
        <fullName evidence="1 4">3-dehydroquinate dehydratase</fullName>
        <shortName evidence="1 4">3-dehydroquinase</shortName>
        <ecNumber evidence="1 4">4.2.1.10</ecNumber>
    </recommendedName>
    <alternativeName>
        <fullName evidence="1">Type I DHQase</fullName>
    </alternativeName>
    <alternativeName>
        <fullName evidence="1">Type I dehydroquinase</fullName>
        <shortName evidence="1">DHQ1</shortName>
    </alternativeName>
</protein>
<comment type="function">
    <text evidence="1 2">Involved in the third step of the chorismate pathway, which leads to the biosynthesis of aromatic amino acids. Catalyzes the cis-dehydration of 3-dehydroquinate (DHQ) and introduces the first double bond of the aromatic ring to yield 3-dehydroshikimate. The reaction involves the formation of an imine intermediate between the keto group of 3-dehydroquinate and the epsilon-amino group of Lys-170 at the active site.</text>
</comment>
<comment type="catalytic activity">
    <reaction evidence="1 2">
        <text>3-dehydroquinate = 3-dehydroshikimate + H2O</text>
        <dbReference type="Rhea" id="RHEA:21096"/>
        <dbReference type="ChEBI" id="CHEBI:15377"/>
        <dbReference type="ChEBI" id="CHEBI:16630"/>
        <dbReference type="ChEBI" id="CHEBI:32364"/>
        <dbReference type="EC" id="4.2.1.10"/>
    </reaction>
</comment>
<comment type="biophysicochemical properties">
    <kinetics>
        <KM evidence="2">36 uM for 3-dehydroquinate (at pH 7.5 and 37 degrees Celsius)</KM>
        <text evidence="2">kcat is 125 sec(-1) for dehydratase activity with 3-dehydroquinate (at pH 7.5 and 37 degrees Celsius).</text>
    </kinetics>
</comment>
<comment type="pathway">
    <text evidence="1">Metabolic intermediate biosynthesis; chorismate biosynthesis; chorismate from D-erythrose 4-phosphate and phosphoenolpyruvate: step 3/7.</text>
</comment>
<comment type="subunit">
    <text evidence="1 2 3">Homodimer or homotetramer.</text>
</comment>
<comment type="similarity">
    <text evidence="1">Belongs to the type-I 3-dehydroquinase family.</text>
</comment>
<sequence length="255" mass="28876">MKRKVQVKNITIGEGRPKICVPIIGKNKKDIIKEAKELKDACLDIIEWRVDFFENVENIKEVKEVLYELRSYIHDIPLLFTFRSVVEGGEKLISRDYYTTLNKEISNTGLVDLIDVELFMGDEVIDEVVNFAHKKEVKVIISNHDFNKTPKKEEIVSRLCRMQELGADLPKIAVMPQNEKDVLVLLEATNEMFKIYADRPIITMSMSGMGVISRLCGEIFGSALTFGAAKSVSAPGQISFKELNSVLNLLHKSIN</sequence>
<dbReference type="EC" id="4.2.1.10" evidence="1 4"/>
<dbReference type="EMBL" id="AM180355">
    <property type="protein sequence ID" value="CAJ69102.2"/>
    <property type="molecule type" value="Genomic_DNA"/>
</dbReference>
<dbReference type="RefSeq" id="WP_009897376.1">
    <property type="nucleotide sequence ID" value="NZ_JAUPES010000011.1"/>
</dbReference>
<dbReference type="RefSeq" id="YP_001088731.2">
    <property type="nucleotide sequence ID" value="NC_009089.1"/>
</dbReference>
<dbReference type="PDB" id="3JS3">
    <property type="method" value="X-ray"/>
    <property type="resolution" value="2.20 A"/>
    <property type="chains" value="A/B/C/D=1-255"/>
</dbReference>
<dbReference type="PDB" id="4H3D">
    <property type="method" value="X-ray"/>
    <property type="resolution" value="1.95 A"/>
    <property type="chains" value="A/B/C/D=1-255"/>
</dbReference>
<dbReference type="PDBsum" id="3JS3"/>
<dbReference type="PDBsum" id="4H3D"/>
<dbReference type="SMR" id="Q186A6"/>
<dbReference type="STRING" id="272563.CD630_22170"/>
<dbReference type="EnsemblBacteria" id="CAJ69102">
    <property type="protein sequence ID" value="CAJ69102"/>
    <property type="gene ID" value="CD630_22170"/>
</dbReference>
<dbReference type="GeneID" id="66354608"/>
<dbReference type="KEGG" id="cdf:CD630_22170"/>
<dbReference type="KEGG" id="pdc:CDIF630_02450"/>
<dbReference type="PATRIC" id="fig|272563.120.peg.2341"/>
<dbReference type="eggNOG" id="COG0710">
    <property type="taxonomic scope" value="Bacteria"/>
</dbReference>
<dbReference type="OrthoDB" id="9813659at2"/>
<dbReference type="PhylomeDB" id="Q186A6"/>
<dbReference type="BioCyc" id="PDIF272563:G12WB-2373-MONOMER"/>
<dbReference type="UniPathway" id="UPA00053">
    <property type="reaction ID" value="UER00086"/>
</dbReference>
<dbReference type="EvolutionaryTrace" id="Q186A6"/>
<dbReference type="Proteomes" id="UP000001978">
    <property type="component" value="Chromosome"/>
</dbReference>
<dbReference type="GO" id="GO:0003855">
    <property type="term" value="F:3-dehydroquinate dehydratase activity"/>
    <property type="evidence" value="ECO:0000314"/>
    <property type="project" value="UniProtKB"/>
</dbReference>
<dbReference type="GO" id="GO:0046279">
    <property type="term" value="P:3,4-dihydroxybenzoate biosynthetic process"/>
    <property type="evidence" value="ECO:0000314"/>
    <property type="project" value="UniProtKB"/>
</dbReference>
<dbReference type="GO" id="GO:0008652">
    <property type="term" value="P:amino acid biosynthetic process"/>
    <property type="evidence" value="ECO:0007669"/>
    <property type="project" value="UniProtKB-KW"/>
</dbReference>
<dbReference type="GO" id="GO:0009073">
    <property type="term" value="P:aromatic amino acid family biosynthetic process"/>
    <property type="evidence" value="ECO:0007669"/>
    <property type="project" value="UniProtKB-KW"/>
</dbReference>
<dbReference type="GO" id="GO:0009423">
    <property type="term" value="P:chorismate biosynthetic process"/>
    <property type="evidence" value="ECO:0007669"/>
    <property type="project" value="UniProtKB-UniRule"/>
</dbReference>
<dbReference type="CDD" id="cd00502">
    <property type="entry name" value="DHQase_I"/>
    <property type="match status" value="1"/>
</dbReference>
<dbReference type="FunFam" id="3.20.20.70:FF:000047">
    <property type="entry name" value="3-dehydroquinate dehydratase"/>
    <property type="match status" value="1"/>
</dbReference>
<dbReference type="Gene3D" id="3.20.20.70">
    <property type="entry name" value="Aldolase class I"/>
    <property type="match status" value="1"/>
</dbReference>
<dbReference type="HAMAP" id="MF_00214">
    <property type="entry name" value="AroD"/>
    <property type="match status" value="1"/>
</dbReference>
<dbReference type="InterPro" id="IPR018508">
    <property type="entry name" value="3-dehydroquinate_DH_AS"/>
</dbReference>
<dbReference type="InterPro" id="IPR013785">
    <property type="entry name" value="Aldolase_TIM"/>
</dbReference>
<dbReference type="InterPro" id="IPR001381">
    <property type="entry name" value="DHquinase_I"/>
</dbReference>
<dbReference type="InterPro" id="IPR050146">
    <property type="entry name" value="Type-I_3-dehydroquinase"/>
</dbReference>
<dbReference type="NCBIfam" id="TIGR01093">
    <property type="entry name" value="aroD"/>
    <property type="match status" value="1"/>
</dbReference>
<dbReference type="PANTHER" id="PTHR43699">
    <property type="entry name" value="3-DEHYDROQUINATE DEHYDRATASE"/>
    <property type="match status" value="1"/>
</dbReference>
<dbReference type="PANTHER" id="PTHR43699:SF1">
    <property type="entry name" value="3-DEHYDROQUINATE DEHYDRATASE"/>
    <property type="match status" value="1"/>
</dbReference>
<dbReference type="Pfam" id="PF01487">
    <property type="entry name" value="DHquinase_I"/>
    <property type="match status" value="1"/>
</dbReference>
<dbReference type="SUPFAM" id="SSF51569">
    <property type="entry name" value="Aldolase"/>
    <property type="match status" value="1"/>
</dbReference>
<dbReference type="PROSITE" id="PS01028">
    <property type="entry name" value="DEHYDROQUINASE_I"/>
    <property type="match status" value="1"/>
</dbReference>
<evidence type="ECO:0000255" key="1">
    <source>
        <dbReference type="HAMAP-Rule" id="MF_00214"/>
    </source>
</evidence>
<evidence type="ECO:0000269" key="2">
    <source>
    </source>
</evidence>
<evidence type="ECO:0000269" key="3">
    <source ref="3"/>
</evidence>
<evidence type="ECO:0000303" key="4">
    <source>
    </source>
</evidence>
<evidence type="ECO:0007829" key="5">
    <source>
        <dbReference type="PDB" id="3JS3"/>
    </source>
</evidence>
<evidence type="ECO:0007829" key="6">
    <source>
        <dbReference type="PDB" id="4H3D"/>
    </source>
</evidence>
<accession>Q186A6</accession>
<keyword id="KW-0002">3D-structure</keyword>
<keyword id="KW-0028">Amino-acid biosynthesis</keyword>
<keyword id="KW-0057">Aromatic amino acid biosynthesis</keyword>
<keyword id="KW-0456">Lyase</keyword>
<keyword id="KW-1185">Reference proteome</keyword>
<keyword id="KW-0704">Schiff base</keyword>